<sequence length="386" mass="42903">MDICVRPVWAEIDLDIIANNMKEIRNLVGEKEIIAVVKANAYGHGALDIASTLLENGASRLAVAIITEADELRDAGITAPIMILGYTPINFAENLINNEIEQTVYDVEYAKELSDFALKLGKKAKVHIAIDTGMGRIGFLPNEEGLNKVLEICSLPGVEVIGLFTHFSTSDEKDKTYTYEQFSKLTAFNKALEDNGIHIPLKHASNSGAIMDLPETYLDGVRCGIISYGYYPSEEVKKENLKLKPALTLKTNVAFVKELDEDMYVSYGRTYKTEKKSKIATLPIGYADGYSRLLSGKAKVIIKGQFANVIGRVCMDQCMIDVTHIEDVKIGDEVILLGEENGLKFDANDMAEIMGTINYEILCMISHRVPRIYKKNNEIVKVINYI</sequence>
<reference key="1">
    <citation type="journal article" date="2006" name="Genome Res.">
        <title>Skewed genomic variability in strains of the toxigenic bacterial pathogen, Clostridium perfringens.</title>
        <authorList>
            <person name="Myers G.S.A."/>
            <person name="Rasko D.A."/>
            <person name="Cheung J.K."/>
            <person name="Ravel J."/>
            <person name="Seshadri R."/>
            <person name="DeBoy R.T."/>
            <person name="Ren Q."/>
            <person name="Varga J."/>
            <person name="Awad M.M."/>
            <person name="Brinkac L.M."/>
            <person name="Daugherty S.C."/>
            <person name="Haft D.H."/>
            <person name="Dodson R.J."/>
            <person name="Madupu R."/>
            <person name="Nelson W.C."/>
            <person name="Rosovitz M.J."/>
            <person name="Sullivan S.A."/>
            <person name="Khouri H."/>
            <person name="Dimitrov G.I."/>
            <person name="Watkins K.L."/>
            <person name="Mulligan S."/>
            <person name="Benton J."/>
            <person name="Radune D."/>
            <person name="Fisher D.J."/>
            <person name="Atkins H.S."/>
            <person name="Hiscox T."/>
            <person name="Jost B.H."/>
            <person name="Billington S.J."/>
            <person name="Songer J.G."/>
            <person name="McClane B.A."/>
            <person name="Titball R.W."/>
            <person name="Rood J.I."/>
            <person name="Melville S.B."/>
            <person name="Paulsen I.T."/>
        </authorList>
    </citation>
    <scope>NUCLEOTIDE SEQUENCE [LARGE SCALE GENOMIC DNA]</scope>
    <source>
        <strain>ATCC 13124 / DSM 756 / JCM 1290 / NCIMB 6125 / NCTC 8237 / S 107 / Type A</strain>
    </source>
</reference>
<protein>
    <recommendedName>
        <fullName evidence="1">Alanine racemase</fullName>
        <ecNumber evidence="1">5.1.1.1</ecNumber>
    </recommendedName>
</protein>
<dbReference type="EC" id="5.1.1.1" evidence="1"/>
<dbReference type="EMBL" id="CP000246">
    <property type="protein sequence ID" value="ABG82585.1"/>
    <property type="molecule type" value="Genomic_DNA"/>
</dbReference>
<dbReference type="RefSeq" id="WP_011590407.1">
    <property type="nucleotide sequence ID" value="NC_008261.1"/>
</dbReference>
<dbReference type="SMR" id="Q0TSS9"/>
<dbReference type="STRING" id="195103.CPF_0861"/>
<dbReference type="PaxDb" id="195103-CPF_0861"/>
<dbReference type="KEGG" id="cpf:CPF_0861"/>
<dbReference type="eggNOG" id="COG0787">
    <property type="taxonomic scope" value="Bacteria"/>
</dbReference>
<dbReference type="HOGENOM" id="CLU_028393_2_2_9"/>
<dbReference type="UniPathway" id="UPA00042">
    <property type="reaction ID" value="UER00497"/>
</dbReference>
<dbReference type="Proteomes" id="UP000001823">
    <property type="component" value="Chromosome"/>
</dbReference>
<dbReference type="GO" id="GO:0005829">
    <property type="term" value="C:cytosol"/>
    <property type="evidence" value="ECO:0007669"/>
    <property type="project" value="TreeGrafter"/>
</dbReference>
<dbReference type="GO" id="GO:0008784">
    <property type="term" value="F:alanine racemase activity"/>
    <property type="evidence" value="ECO:0007669"/>
    <property type="project" value="UniProtKB-UniRule"/>
</dbReference>
<dbReference type="GO" id="GO:0030170">
    <property type="term" value="F:pyridoxal phosphate binding"/>
    <property type="evidence" value="ECO:0007669"/>
    <property type="project" value="UniProtKB-UniRule"/>
</dbReference>
<dbReference type="GO" id="GO:0030632">
    <property type="term" value="P:D-alanine biosynthetic process"/>
    <property type="evidence" value="ECO:0007669"/>
    <property type="project" value="UniProtKB-UniRule"/>
</dbReference>
<dbReference type="GO" id="GO:0009252">
    <property type="term" value="P:peptidoglycan biosynthetic process"/>
    <property type="evidence" value="ECO:0007669"/>
    <property type="project" value="TreeGrafter"/>
</dbReference>
<dbReference type="CDD" id="cd00430">
    <property type="entry name" value="PLPDE_III_AR"/>
    <property type="match status" value="1"/>
</dbReference>
<dbReference type="FunFam" id="2.40.37.10:FF:000006">
    <property type="entry name" value="Alanine racemase"/>
    <property type="match status" value="1"/>
</dbReference>
<dbReference type="FunFam" id="3.20.20.10:FF:000002">
    <property type="entry name" value="Alanine racemase"/>
    <property type="match status" value="1"/>
</dbReference>
<dbReference type="Gene3D" id="3.20.20.10">
    <property type="entry name" value="Alanine racemase"/>
    <property type="match status" value="1"/>
</dbReference>
<dbReference type="Gene3D" id="2.40.37.10">
    <property type="entry name" value="Lyase, Ornithine Decarboxylase, Chain A, domain 1"/>
    <property type="match status" value="1"/>
</dbReference>
<dbReference type="HAMAP" id="MF_01201">
    <property type="entry name" value="Ala_racemase"/>
    <property type="match status" value="1"/>
</dbReference>
<dbReference type="InterPro" id="IPR000821">
    <property type="entry name" value="Ala_racemase"/>
</dbReference>
<dbReference type="InterPro" id="IPR009006">
    <property type="entry name" value="Ala_racemase/Decarboxylase_C"/>
</dbReference>
<dbReference type="InterPro" id="IPR011079">
    <property type="entry name" value="Ala_racemase_C"/>
</dbReference>
<dbReference type="InterPro" id="IPR001608">
    <property type="entry name" value="Ala_racemase_N"/>
</dbReference>
<dbReference type="InterPro" id="IPR020622">
    <property type="entry name" value="Ala_racemase_pyridoxalP-BS"/>
</dbReference>
<dbReference type="InterPro" id="IPR029066">
    <property type="entry name" value="PLP-binding_barrel"/>
</dbReference>
<dbReference type="NCBIfam" id="TIGR00492">
    <property type="entry name" value="alr"/>
    <property type="match status" value="1"/>
</dbReference>
<dbReference type="PANTHER" id="PTHR30511">
    <property type="entry name" value="ALANINE RACEMASE"/>
    <property type="match status" value="1"/>
</dbReference>
<dbReference type="PANTHER" id="PTHR30511:SF0">
    <property type="entry name" value="ALANINE RACEMASE, CATABOLIC-RELATED"/>
    <property type="match status" value="1"/>
</dbReference>
<dbReference type="Pfam" id="PF00842">
    <property type="entry name" value="Ala_racemase_C"/>
    <property type="match status" value="1"/>
</dbReference>
<dbReference type="Pfam" id="PF01168">
    <property type="entry name" value="Ala_racemase_N"/>
    <property type="match status" value="1"/>
</dbReference>
<dbReference type="PRINTS" id="PR00992">
    <property type="entry name" value="ALARACEMASE"/>
</dbReference>
<dbReference type="SMART" id="SM01005">
    <property type="entry name" value="Ala_racemase_C"/>
    <property type="match status" value="1"/>
</dbReference>
<dbReference type="SUPFAM" id="SSF50621">
    <property type="entry name" value="Alanine racemase C-terminal domain-like"/>
    <property type="match status" value="1"/>
</dbReference>
<dbReference type="SUPFAM" id="SSF51419">
    <property type="entry name" value="PLP-binding barrel"/>
    <property type="match status" value="1"/>
</dbReference>
<dbReference type="PROSITE" id="PS00395">
    <property type="entry name" value="ALANINE_RACEMASE"/>
    <property type="match status" value="1"/>
</dbReference>
<proteinExistence type="inferred from homology"/>
<name>ALR_CLOP1</name>
<comment type="function">
    <text evidence="1">Catalyzes the interconversion of L-alanine and D-alanine. May also act on other amino acids.</text>
</comment>
<comment type="catalytic activity">
    <reaction evidence="1">
        <text>L-alanine = D-alanine</text>
        <dbReference type="Rhea" id="RHEA:20249"/>
        <dbReference type="ChEBI" id="CHEBI:57416"/>
        <dbReference type="ChEBI" id="CHEBI:57972"/>
        <dbReference type="EC" id="5.1.1.1"/>
    </reaction>
</comment>
<comment type="cofactor">
    <cofactor evidence="1">
        <name>pyridoxal 5'-phosphate</name>
        <dbReference type="ChEBI" id="CHEBI:597326"/>
    </cofactor>
</comment>
<comment type="pathway">
    <text evidence="1">Amino-acid biosynthesis; D-alanine biosynthesis; D-alanine from L-alanine: step 1/1.</text>
</comment>
<comment type="similarity">
    <text evidence="1">Belongs to the alanine racemase family.</text>
</comment>
<feature type="chain" id="PRO_1000065980" description="Alanine racemase">
    <location>
        <begin position="1"/>
        <end position="386"/>
    </location>
</feature>
<feature type="active site" description="Proton acceptor; specific for D-alanine" evidence="1">
    <location>
        <position position="38"/>
    </location>
</feature>
<feature type="active site" description="Proton acceptor; specific for L-alanine" evidence="1">
    <location>
        <position position="267"/>
    </location>
</feature>
<feature type="binding site" evidence="1">
    <location>
        <position position="136"/>
    </location>
    <ligand>
        <name>substrate</name>
    </ligand>
</feature>
<feature type="binding site" evidence="1">
    <location>
        <position position="315"/>
    </location>
    <ligand>
        <name>substrate</name>
    </ligand>
</feature>
<feature type="modified residue" description="N6-(pyridoxal phosphate)lysine" evidence="1">
    <location>
        <position position="38"/>
    </location>
</feature>
<accession>Q0TSS9</accession>
<keyword id="KW-0413">Isomerase</keyword>
<keyword id="KW-0663">Pyridoxal phosphate</keyword>
<organism>
    <name type="scientific">Clostridium perfringens (strain ATCC 13124 / DSM 756 / JCM 1290 / NCIMB 6125 / NCTC 8237 / Type A)</name>
    <dbReference type="NCBI Taxonomy" id="195103"/>
    <lineage>
        <taxon>Bacteria</taxon>
        <taxon>Bacillati</taxon>
        <taxon>Bacillota</taxon>
        <taxon>Clostridia</taxon>
        <taxon>Eubacteriales</taxon>
        <taxon>Clostridiaceae</taxon>
        <taxon>Clostridium</taxon>
    </lineage>
</organism>
<evidence type="ECO:0000255" key="1">
    <source>
        <dbReference type="HAMAP-Rule" id="MF_01201"/>
    </source>
</evidence>
<gene>
    <name type="primary">alr</name>
    <name type="ordered locus">CPF_0861</name>
</gene>